<gene>
    <name evidence="1" type="primary">hisI</name>
    <name type="ordered locus">RSal33209_2338</name>
</gene>
<reference key="1">
    <citation type="journal article" date="2008" name="J. Bacteriol.">
        <title>Genome sequence of the fish pathogen Renibacterium salmoninarum suggests reductive evolution away from an environmental Arthrobacter ancestor.</title>
        <authorList>
            <person name="Wiens G.D."/>
            <person name="Rockey D.D."/>
            <person name="Wu Z."/>
            <person name="Chang J."/>
            <person name="Levy R."/>
            <person name="Crane S."/>
            <person name="Chen D.S."/>
            <person name="Capri G.R."/>
            <person name="Burnett J.R."/>
            <person name="Sudheesh P.S."/>
            <person name="Schipma M.J."/>
            <person name="Burd H."/>
            <person name="Bhattacharyya A."/>
            <person name="Rhodes L.D."/>
            <person name="Kaul R."/>
            <person name="Strom M.S."/>
        </authorList>
    </citation>
    <scope>NUCLEOTIDE SEQUENCE [LARGE SCALE GENOMIC DNA]</scope>
    <source>
        <strain>ATCC 33209 / DSM 20767 / JCM 11484 / NBRC 15589 / NCIMB 2235</strain>
    </source>
</reference>
<keyword id="KW-0028">Amino-acid biosynthesis</keyword>
<keyword id="KW-0963">Cytoplasm</keyword>
<keyword id="KW-0368">Histidine biosynthesis</keyword>
<keyword id="KW-0378">Hydrolase</keyword>
<keyword id="KW-0460">Magnesium</keyword>
<keyword id="KW-0479">Metal-binding</keyword>
<keyword id="KW-1185">Reference proteome</keyword>
<keyword id="KW-0862">Zinc</keyword>
<organism>
    <name type="scientific">Renibacterium salmoninarum (strain ATCC 33209 / DSM 20767 / JCM 11484 / NBRC 15589 / NCIMB 2235)</name>
    <dbReference type="NCBI Taxonomy" id="288705"/>
    <lineage>
        <taxon>Bacteria</taxon>
        <taxon>Bacillati</taxon>
        <taxon>Actinomycetota</taxon>
        <taxon>Actinomycetes</taxon>
        <taxon>Micrococcales</taxon>
        <taxon>Micrococcaceae</taxon>
        <taxon>Renibacterium</taxon>
    </lineage>
</organism>
<evidence type="ECO:0000255" key="1">
    <source>
        <dbReference type="HAMAP-Rule" id="MF_01021"/>
    </source>
</evidence>
<dbReference type="EC" id="3.5.4.19" evidence="1"/>
<dbReference type="EMBL" id="CP000910">
    <property type="protein sequence ID" value="ABY24068.1"/>
    <property type="molecule type" value="Genomic_DNA"/>
</dbReference>
<dbReference type="RefSeq" id="WP_012245731.1">
    <property type="nucleotide sequence ID" value="NC_010168.1"/>
</dbReference>
<dbReference type="SMR" id="A9WR59"/>
<dbReference type="STRING" id="288705.RSal33209_2338"/>
<dbReference type="KEGG" id="rsa:RSal33209_2338"/>
<dbReference type="eggNOG" id="COG0139">
    <property type="taxonomic scope" value="Bacteria"/>
</dbReference>
<dbReference type="HOGENOM" id="CLU_048577_5_1_11"/>
<dbReference type="UniPathway" id="UPA00031">
    <property type="reaction ID" value="UER00008"/>
</dbReference>
<dbReference type="Proteomes" id="UP000002007">
    <property type="component" value="Chromosome"/>
</dbReference>
<dbReference type="GO" id="GO:0005737">
    <property type="term" value="C:cytoplasm"/>
    <property type="evidence" value="ECO:0007669"/>
    <property type="project" value="UniProtKB-SubCell"/>
</dbReference>
<dbReference type="GO" id="GO:0000287">
    <property type="term" value="F:magnesium ion binding"/>
    <property type="evidence" value="ECO:0007669"/>
    <property type="project" value="UniProtKB-UniRule"/>
</dbReference>
<dbReference type="GO" id="GO:0004635">
    <property type="term" value="F:phosphoribosyl-AMP cyclohydrolase activity"/>
    <property type="evidence" value="ECO:0007669"/>
    <property type="project" value="UniProtKB-UniRule"/>
</dbReference>
<dbReference type="GO" id="GO:0008270">
    <property type="term" value="F:zinc ion binding"/>
    <property type="evidence" value="ECO:0007669"/>
    <property type="project" value="UniProtKB-UniRule"/>
</dbReference>
<dbReference type="GO" id="GO:0000105">
    <property type="term" value="P:L-histidine biosynthetic process"/>
    <property type="evidence" value="ECO:0007669"/>
    <property type="project" value="UniProtKB-UniRule"/>
</dbReference>
<dbReference type="FunFam" id="3.10.20.810:FF:000001">
    <property type="entry name" value="Histidine biosynthesis bifunctional protein HisIE"/>
    <property type="match status" value="1"/>
</dbReference>
<dbReference type="Gene3D" id="3.10.20.810">
    <property type="entry name" value="Phosphoribosyl-AMP cyclohydrolase"/>
    <property type="match status" value="1"/>
</dbReference>
<dbReference type="HAMAP" id="MF_01021">
    <property type="entry name" value="HisI"/>
    <property type="match status" value="1"/>
</dbReference>
<dbReference type="InterPro" id="IPR026660">
    <property type="entry name" value="PRA-CH"/>
</dbReference>
<dbReference type="InterPro" id="IPR002496">
    <property type="entry name" value="PRib_AMP_CycHydrolase_dom"/>
</dbReference>
<dbReference type="InterPro" id="IPR038019">
    <property type="entry name" value="PRib_AMP_CycHydrolase_sf"/>
</dbReference>
<dbReference type="NCBIfam" id="NF000768">
    <property type="entry name" value="PRK00051.1"/>
    <property type="match status" value="1"/>
</dbReference>
<dbReference type="PANTHER" id="PTHR42945">
    <property type="entry name" value="HISTIDINE BIOSYNTHESIS BIFUNCTIONAL PROTEIN"/>
    <property type="match status" value="1"/>
</dbReference>
<dbReference type="PANTHER" id="PTHR42945:SF11">
    <property type="entry name" value="PHOSPHORIBOSYL-AMP CYCLOHYDROLASE"/>
    <property type="match status" value="1"/>
</dbReference>
<dbReference type="Pfam" id="PF01502">
    <property type="entry name" value="PRA-CH"/>
    <property type="match status" value="1"/>
</dbReference>
<dbReference type="SUPFAM" id="SSF141734">
    <property type="entry name" value="HisI-like"/>
    <property type="match status" value="1"/>
</dbReference>
<sequence length="132" mass="14653">MPAQISSEDQQLSTKIAERLKRDEAGLVAAVVQQFDSKEVLMLGWMDDEALRRTLRSGRVTFFSRSRQEYWRKGDTSGHIQMVKAVALDCDGDALLISVDQHGPACHTGTRSCFDGRALPAFVEPVFVEPVA</sequence>
<proteinExistence type="inferred from homology"/>
<comment type="function">
    <text evidence="1">Catalyzes the hydrolysis of the adenine ring of phosphoribosyl-AMP.</text>
</comment>
<comment type="catalytic activity">
    <reaction evidence="1">
        <text>1-(5-phospho-beta-D-ribosyl)-5'-AMP + H2O = 1-(5-phospho-beta-D-ribosyl)-5-[(5-phospho-beta-D-ribosylamino)methylideneamino]imidazole-4-carboxamide</text>
        <dbReference type="Rhea" id="RHEA:20049"/>
        <dbReference type="ChEBI" id="CHEBI:15377"/>
        <dbReference type="ChEBI" id="CHEBI:58435"/>
        <dbReference type="ChEBI" id="CHEBI:59457"/>
        <dbReference type="EC" id="3.5.4.19"/>
    </reaction>
</comment>
<comment type="cofactor">
    <cofactor evidence="1">
        <name>Mg(2+)</name>
        <dbReference type="ChEBI" id="CHEBI:18420"/>
    </cofactor>
    <text evidence="1">Binds 1 Mg(2+) ion per subunit.</text>
</comment>
<comment type="cofactor">
    <cofactor evidence="1">
        <name>Zn(2+)</name>
        <dbReference type="ChEBI" id="CHEBI:29105"/>
    </cofactor>
    <text evidence="1">Binds 1 zinc ion per subunit.</text>
</comment>
<comment type="pathway">
    <text evidence="1">Amino-acid biosynthesis; L-histidine biosynthesis; L-histidine from 5-phospho-alpha-D-ribose 1-diphosphate: step 3/9.</text>
</comment>
<comment type="subunit">
    <text evidence="1">Homodimer.</text>
</comment>
<comment type="subcellular location">
    <subcellularLocation>
        <location evidence="1">Cytoplasm</location>
    </subcellularLocation>
</comment>
<comment type="similarity">
    <text evidence="1">Belongs to the PRA-CH family.</text>
</comment>
<name>HIS3_RENSM</name>
<feature type="chain" id="PRO_1000084185" description="Phosphoribosyl-AMP cyclohydrolase">
    <location>
        <begin position="1"/>
        <end position="132"/>
    </location>
</feature>
<feature type="binding site" evidence="1">
    <location>
        <position position="89"/>
    </location>
    <ligand>
        <name>Mg(2+)</name>
        <dbReference type="ChEBI" id="CHEBI:18420"/>
    </ligand>
</feature>
<feature type="binding site" evidence="1">
    <location>
        <position position="90"/>
    </location>
    <ligand>
        <name>Zn(2+)</name>
        <dbReference type="ChEBI" id="CHEBI:29105"/>
        <note>ligand shared between dimeric partners</note>
    </ligand>
</feature>
<feature type="binding site" evidence="1">
    <location>
        <position position="91"/>
    </location>
    <ligand>
        <name>Mg(2+)</name>
        <dbReference type="ChEBI" id="CHEBI:18420"/>
    </ligand>
</feature>
<feature type="binding site" evidence="1">
    <location>
        <position position="93"/>
    </location>
    <ligand>
        <name>Mg(2+)</name>
        <dbReference type="ChEBI" id="CHEBI:18420"/>
    </ligand>
</feature>
<feature type="binding site" evidence="1">
    <location>
        <position position="106"/>
    </location>
    <ligand>
        <name>Zn(2+)</name>
        <dbReference type="ChEBI" id="CHEBI:29105"/>
        <note>ligand shared between dimeric partners</note>
    </ligand>
</feature>
<feature type="binding site" evidence="1">
    <location>
        <position position="113"/>
    </location>
    <ligand>
        <name>Zn(2+)</name>
        <dbReference type="ChEBI" id="CHEBI:29105"/>
        <note>ligand shared between dimeric partners</note>
    </ligand>
</feature>
<accession>A9WR59</accession>
<protein>
    <recommendedName>
        <fullName evidence="1">Phosphoribosyl-AMP cyclohydrolase</fullName>
        <shortName evidence="1">PRA-CH</shortName>
        <ecNumber evidence="1">3.5.4.19</ecNumber>
    </recommendedName>
</protein>